<gene>
    <name type="primary">xghA</name>
    <name type="ORF">AFUA_8G06890</name>
</gene>
<comment type="function">
    <text evidence="1">Pectinolytic enzyme involved in the degradation of xylogalacturonan (xga), a galacturonan backbone heavily substituted with xylose, and which is one important component of the hairy regions of pectin. Activity requires a galacturonic acid backbone substituted with xylose (By similarity).</text>
</comment>
<comment type="subcellular location">
    <subcellularLocation>
        <location evidence="1">Secreted</location>
    </subcellularLocation>
</comment>
<comment type="similarity">
    <text evidence="4">Belongs to the glycosyl hydrolase 28 family.</text>
</comment>
<comment type="sequence caution" evidence="4">
    <conflict type="erroneous initiation">
        <sequence resource="EMBL-CDS" id="EAL85450"/>
    </conflict>
    <text>Extended N-terminus.</text>
</comment>
<keyword id="KW-0119">Carbohydrate metabolism</keyword>
<keyword id="KW-0961">Cell wall biogenesis/degradation</keyword>
<keyword id="KW-0325">Glycoprotein</keyword>
<keyword id="KW-0326">Glycosidase</keyword>
<keyword id="KW-0378">Hydrolase</keyword>
<keyword id="KW-0624">Polysaccharide degradation</keyword>
<keyword id="KW-1185">Reference proteome</keyword>
<keyword id="KW-0677">Repeat</keyword>
<keyword id="KW-0964">Secreted</keyword>
<keyword id="KW-0732">Signal</keyword>
<accession>Q4WBT4</accession>
<reference key="1">
    <citation type="journal article" date="2005" name="Nature">
        <title>Genomic sequence of the pathogenic and allergenic filamentous fungus Aspergillus fumigatus.</title>
        <authorList>
            <person name="Nierman W.C."/>
            <person name="Pain A."/>
            <person name="Anderson M.J."/>
            <person name="Wortman J.R."/>
            <person name="Kim H.S."/>
            <person name="Arroyo J."/>
            <person name="Berriman M."/>
            <person name="Abe K."/>
            <person name="Archer D.B."/>
            <person name="Bermejo C."/>
            <person name="Bennett J.W."/>
            <person name="Bowyer P."/>
            <person name="Chen D."/>
            <person name="Collins M."/>
            <person name="Coulsen R."/>
            <person name="Davies R."/>
            <person name="Dyer P.S."/>
            <person name="Farman M.L."/>
            <person name="Fedorova N."/>
            <person name="Fedorova N.D."/>
            <person name="Feldblyum T.V."/>
            <person name="Fischer R."/>
            <person name="Fosker N."/>
            <person name="Fraser A."/>
            <person name="Garcia J.L."/>
            <person name="Garcia M.J."/>
            <person name="Goble A."/>
            <person name="Goldman G.H."/>
            <person name="Gomi K."/>
            <person name="Griffith-Jones S."/>
            <person name="Gwilliam R."/>
            <person name="Haas B.J."/>
            <person name="Haas H."/>
            <person name="Harris D.E."/>
            <person name="Horiuchi H."/>
            <person name="Huang J."/>
            <person name="Humphray S."/>
            <person name="Jimenez J."/>
            <person name="Keller N."/>
            <person name="Khouri H."/>
            <person name="Kitamoto K."/>
            <person name="Kobayashi T."/>
            <person name="Konzack S."/>
            <person name="Kulkarni R."/>
            <person name="Kumagai T."/>
            <person name="Lafton A."/>
            <person name="Latge J.-P."/>
            <person name="Li W."/>
            <person name="Lord A."/>
            <person name="Lu C."/>
            <person name="Majoros W.H."/>
            <person name="May G.S."/>
            <person name="Miller B.L."/>
            <person name="Mohamoud Y."/>
            <person name="Molina M."/>
            <person name="Monod M."/>
            <person name="Mouyna I."/>
            <person name="Mulligan S."/>
            <person name="Murphy L.D."/>
            <person name="O'Neil S."/>
            <person name="Paulsen I."/>
            <person name="Penalva M.A."/>
            <person name="Pertea M."/>
            <person name="Price C."/>
            <person name="Pritchard B.L."/>
            <person name="Quail M.A."/>
            <person name="Rabbinowitsch E."/>
            <person name="Rawlins N."/>
            <person name="Rajandream M.A."/>
            <person name="Reichard U."/>
            <person name="Renauld H."/>
            <person name="Robson G.D."/>
            <person name="Rodriguez de Cordoba S."/>
            <person name="Rodriguez-Pena J.M."/>
            <person name="Ronning C.M."/>
            <person name="Rutter S."/>
            <person name="Salzberg S.L."/>
            <person name="Sanchez M."/>
            <person name="Sanchez-Ferrero J.C."/>
            <person name="Saunders D."/>
            <person name="Seeger K."/>
            <person name="Squares R."/>
            <person name="Squares S."/>
            <person name="Takeuchi M."/>
            <person name="Tekaia F."/>
            <person name="Turner G."/>
            <person name="Vazquez de Aldana C.R."/>
            <person name="Weidman J."/>
            <person name="White O."/>
            <person name="Woodward J.R."/>
            <person name="Yu J.-H."/>
            <person name="Fraser C.M."/>
            <person name="Galagan J.E."/>
            <person name="Asai K."/>
            <person name="Machida M."/>
            <person name="Hall N."/>
            <person name="Barrell B.G."/>
            <person name="Denning D.W."/>
        </authorList>
    </citation>
    <scope>NUCLEOTIDE SEQUENCE [LARGE SCALE GENOMIC DNA]</scope>
    <source>
        <strain>ATCC MYA-4609 / CBS 101355 / FGSC A1100 / Af293</strain>
    </source>
</reference>
<name>XGHA_ASPFU</name>
<sequence length="406" mass="42267">MLYPRNLALFSLLSLSSAAPSQVERSPDAVLKPRAVCTPTAGGSPSIDDVPAIRKAIASCGNGGTIVFPAGSTYYLNSVLDLAGCSNCDIQVEGVLKFSGSTEYWGGKTAMLNIDMINGLRLRSLTGSGVIDGNGQNAYDRFASDKNYKRPTLLYITGGSNIEVSGLRQKNPPNVFNSVKGDTQHVTFKNLRMDATSNSQNPPKNTDGFDIGASTHVTISSVSVTNDDDCVAFKPGSNYVTVEDVTCTGSHGISVGSLGKSGPDVVQNILAHRITMIESTKAAGIKTYPSGNGHGLSTVKNVTFSDFNVRGCDYAFQIESCYGESESYCESNPGNAILQGIVVKGFSGTTSGKYDPVVANLNCGARGTCDVSMSAFSVKAPSGKATVLCDNTPSSLGVSCTSGASG</sequence>
<organism>
    <name type="scientific">Aspergillus fumigatus (strain ATCC MYA-4609 / CBS 101355 / FGSC A1100 / Af293)</name>
    <name type="common">Neosartorya fumigata</name>
    <dbReference type="NCBI Taxonomy" id="330879"/>
    <lineage>
        <taxon>Eukaryota</taxon>
        <taxon>Fungi</taxon>
        <taxon>Dikarya</taxon>
        <taxon>Ascomycota</taxon>
        <taxon>Pezizomycotina</taxon>
        <taxon>Eurotiomycetes</taxon>
        <taxon>Eurotiomycetidae</taxon>
        <taxon>Eurotiales</taxon>
        <taxon>Aspergillaceae</taxon>
        <taxon>Aspergillus</taxon>
        <taxon>Aspergillus subgen. Fumigati</taxon>
    </lineage>
</organism>
<dbReference type="EC" id="3.2.1.-"/>
<dbReference type="EMBL" id="AAHF01000013">
    <property type="protein sequence ID" value="EAL85450.1"/>
    <property type="status" value="ALT_INIT"/>
    <property type="molecule type" value="Genomic_DNA"/>
</dbReference>
<dbReference type="RefSeq" id="XP_747488.1">
    <property type="nucleotide sequence ID" value="XM_742395.1"/>
</dbReference>
<dbReference type="SMR" id="Q4WBT4"/>
<dbReference type="STRING" id="330879.Q4WBT4"/>
<dbReference type="CAZy" id="GH28">
    <property type="family name" value="Glycoside Hydrolase Family 28"/>
</dbReference>
<dbReference type="GlyCosmos" id="Q4WBT4">
    <property type="glycosylation" value="1 site, No reported glycans"/>
</dbReference>
<dbReference type="GeneID" id="3504762"/>
<dbReference type="KEGG" id="afm:AFUA_8G06890"/>
<dbReference type="eggNOG" id="ENOG502QTHU">
    <property type="taxonomic scope" value="Eukaryota"/>
</dbReference>
<dbReference type="HOGENOM" id="CLU_016031_1_3_1"/>
<dbReference type="InParanoid" id="Q4WBT4"/>
<dbReference type="OrthoDB" id="187139at2759"/>
<dbReference type="Proteomes" id="UP000002530">
    <property type="component" value="Chromosome 8"/>
</dbReference>
<dbReference type="GO" id="GO:0005576">
    <property type="term" value="C:extracellular region"/>
    <property type="evidence" value="ECO:0007669"/>
    <property type="project" value="UniProtKB-SubCell"/>
</dbReference>
<dbReference type="GO" id="GO:0004650">
    <property type="term" value="F:polygalacturonase activity"/>
    <property type="evidence" value="ECO:0000314"/>
    <property type="project" value="UniProtKB"/>
</dbReference>
<dbReference type="GO" id="GO:0071555">
    <property type="term" value="P:cell wall organization"/>
    <property type="evidence" value="ECO:0007669"/>
    <property type="project" value="UniProtKB-KW"/>
</dbReference>
<dbReference type="GO" id="GO:0045490">
    <property type="term" value="P:pectin catabolic process"/>
    <property type="evidence" value="ECO:0000314"/>
    <property type="project" value="UniProtKB"/>
</dbReference>
<dbReference type="FunFam" id="2.160.20.10:FF:000097">
    <property type="entry name" value="Endo-xylogalacturonan hydrolase A"/>
    <property type="match status" value="1"/>
</dbReference>
<dbReference type="Gene3D" id="2.160.20.10">
    <property type="entry name" value="Single-stranded right-handed beta-helix, Pectin lyase-like"/>
    <property type="match status" value="1"/>
</dbReference>
<dbReference type="InterPro" id="IPR000743">
    <property type="entry name" value="Glyco_hydro_28"/>
</dbReference>
<dbReference type="InterPro" id="IPR006626">
    <property type="entry name" value="PbH1"/>
</dbReference>
<dbReference type="InterPro" id="IPR012334">
    <property type="entry name" value="Pectin_lyas_fold"/>
</dbReference>
<dbReference type="InterPro" id="IPR011050">
    <property type="entry name" value="Pectin_lyase_fold/virulence"/>
</dbReference>
<dbReference type="PANTHER" id="PTHR31736">
    <property type="match status" value="1"/>
</dbReference>
<dbReference type="PANTHER" id="PTHR31736:SF9">
    <property type="entry name" value="ENDO-XYLOGALACTURONAN HYDROLASE A-RELATED"/>
    <property type="match status" value="1"/>
</dbReference>
<dbReference type="Pfam" id="PF00295">
    <property type="entry name" value="Glyco_hydro_28"/>
    <property type="match status" value="1"/>
</dbReference>
<dbReference type="SMART" id="SM00710">
    <property type="entry name" value="PbH1"/>
    <property type="match status" value="4"/>
</dbReference>
<dbReference type="SUPFAM" id="SSF51126">
    <property type="entry name" value="Pectin lyase-like"/>
    <property type="match status" value="1"/>
</dbReference>
<dbReference type="PROSITE" id="PS00502">
    <property type="entry name" value="POLYGALACTURONASE"/>
    <property type="match status" value="1"/>
</dbReference>
<proteinExistence type="inferred from homology"/>
<feature type="signal peptide" evidence="2">
    <location>
        <begin position="1"/>
        <end position="18"/>
    </location>
</feature>
<feature type="chain" id="PRO_0000394698" description="Probable endo-xylogalacturonan hydrolase A">
    <location>
        <begin position="19"/>
        <end position="406"/>
    </location>
</feature>
<feature type="repeat" description="PbH1 1">
    <location>
        <begin position="183"/>
        <end position="213"/>
    </location>
</feature>
<feature type="repeat" description="PbH1 2">
    <location>
        <begin position="214"/>
        <end position="235"/>
    </location>
</feature>
<feature type="repeat" description="PbH1 3">
    <location>
        <begin position="237"/>
        <end position="257"/>
    </location>
</feature>
<feature type="repeat" description="PbH1 4">
    <location>
        <begin position="299"/>
        <end position="320"/>
    </location>
</feature>
<feature type="active site" description="Proton donor" evidence="3">
    <location>
        <position position="228"/>
    </location>
</feature>
<feature type="active site" evidence="3">
    <location>
        <position position="251"/>
    </location>
</feature>
<feature type="glycosylation site" description="N-linked (GlcNAc...) asparagine" evidence="2">
    <location>
        <position position="301"/>
    </location>
</feature>
<evidence type="ECO:0000250" key="1"/>
<evidence type="ECO:0000255" key="2"/>
<evidence type="ECO:0000255" key="3">
    <source>
        <dbReference type="PROSITE-ProRule" id="PRU10052"/>
    </source>
</evidence>
<evidence type="ECO:0000305" key="4"/>
<protein>
    <recommendedName>
        <fullName>Probable endo-xylogalacturonan hydrolase A</fullName>
        <ecNumber>3.2.1.-</ecNumber>
    </recommendedName>
</protein>